<proteinExistence type="inferred from homology"/>
<sequence>MKNYLLQIEYFGKNYCGWQRQSHSPSVQEELEKALSKIANQNIEVTCAGRTDTGVHATSQIVNFYSNADRPLSAWQRGVNALLPQDIKILAVQQVDNNFNSRFTAINRTYNYIIYNSATSSPIFAEHCLWENRELDIDKMNQACEYLLGEQDFSSFRSSQCQSNTPFRNIQKAEFIKQGSFIVFEVVGNAFLHHMIRNLVGSLLKVGLGFESPEWIKVVLEAKDRTQAAETAKAHGLYFVGVEYPEFSFKRQIIKLFC</sequence>
<organism>
    <name type="scientific">Francisella tularensis subsp. tularensis (strain SCHU S4 / Schu 4)</name>
    <dbReference type="NCBI Taxonomy" id="177416"/>
    <lineage>
        <taxon>Bacteria</taxon>
        <taxon>Pseudomonadati</taxon>
        <taxon>Pseudomonadota</taxon>
        <taxon>Gammaproteobacteria</taxon>
        <taxon>Thiotrichales</taxon>
        <taxon>Francisellaceae</taxon>
        <taxon>Francisella</taxon>
    </lineage>
</organism>
<protein>
    <recommendedName>
        <fullName evidence="1">tRNA pseudouridine synthase A</fullName>
        <ecNumber evidence="1">5.4.99.12</ecNumber>
    </recommendedName>
    <alternativeName>
        <fullName evidence="1">tRNA pseudouridine(38-40) synthase</fullName>
    </alternativeName>
    <alternativeName>
        <fullName evidence="1">tRNA pseudouridylate synthase I</fullName>
    </alternativeName>
    <alternativeName>
        <fullName evidence="1">tRNA-uridine isomerase I</fullName>
    </alternativeName>
</protein>
<name>TRUA_FRATT</name>
<comment type="function">
    <text evidence="1">Formation of pseudouridine at positions 38, 39 and 40 in the anticodon stem and loop of transfer RNAs.</text>
</comment>
<comment type="catalytic activity">
    <reaction evidence="1">
        <text>uridine(38/39/40) in tRNA = pseudouridine(38/39/40) in tRNA</text>
        <dbReference type="Rhea" id="RHEA:22376"/>
        <dbReference type="Rhea" id="RHEA-COMP:10085"/>
        <dbReference type="Rhea" id="RHEA-COMP:10087"/>
        <dbReference type="ChEBI" id="CHEBI:65314"/>
        <dbReference type="ChEBI" id="CHEBI:65315"/>
        <dbReference type="EC" id="5.4.99.12"/>
    </reaction>
</comment>
<comment type="subunit">
    <text evidence="1">Homodimer.</text>
</comment>
<comment type="similarity">
    <text evidence="1">Belongs to the tRNA pseudouridine synthase TruA family.</text>
</comment>
<feature type="chain" id="PRO_0000057381" description="tRNA pseudouridine synthase A">
    <location>
        <begin position="1"/>
        <end position="258"/>
    </location>
</feature>
<feature type="active site" description="Nucleophile" evidence="1">
    <location>
        <position position="52"/>
    </location>
</feature>
<feature type="binding site" evidence="1">
    <location>
        <position position="110"/>
    </location>
    <ligand>
        <name>substrate</name>
    </ligand>
</feature>
<accession>Q5NG36</accession>
<keyword id="KW-0413">Isomerase</keyword>
<keyword id="KW-1185">Reference proteome</keyword>
<keyword id="KW-0819">tRNA processing</keyword>
<dbReference type="EC" id="5.4.99.12" evidence="1"/>
<dbReference type="EMBL" id="AJ749949">
    <property type="protein sequence ID" value="CAG45654.1"/>
    <property type="molecule type" value="Genomic_DNA"/>
</dbReference>
<dbReference type="RefSeq" id="WP_003021118.1">
    <property type="nucleotide sequence ID" value="NZ_CP010290.1"/>
</dbReference>
<dbReference type="RefSeq" id="YP_170006.1">
    <property type="nucleotide sequence ID" value="NC_006570.2"/>
</dbReference>
<dbReference type="SMR" id="Q5NG36"/>
<dbReference type="STRING" id="177416.FTT_1021c"/>
<dbReference type="DNASU" id="3190996"/>
<dbReference type="EnsemblBacteria" id="CAG45654">
    <property type="protein sequence ID" value="CAG45654"/>
    <property type="gene ID" value="FTT_1021c"/>
</dbReference>
<dbReference type="KEGG" id="ftu:FTT_1021c"/>
<dbReference type="eggNOG" id="COG0101">
    <property type="taxonomic scope" value="Bacteria"/>
</dbReference>
<dbReference type="OrthoDB" id="9811823at2"/>
<dbReference type="Proteomes" id="UP000001174">
    <property type="component" value="Chromosome"/>
</dbReference>
<dbReference type="GO" id="GO:0003723">
    <property type="term" value="F:RNA binding"/>
    <property type="evidence" value="ECO:0007669"/>
    <property type="project" value="InterPro"/>
</dbReference>
<dbReference type="GO" id="GO:0160147">
    <property type="term" value="F:tRNA pseudouridine(38-40) synthase activity"/>
    <property type="evidence" value="ECO:0007669"/>
    <property type="project" value="UniProtKB-EC"/>
</dbReference>
<dbReference type="GO" id="GO:0031119">
    <property type="term" value="P:tRNA pseudouridine synthesis"/>
    <property type="evidence" value="ECO:0007669"/>
    <property type="project" value="UniProtKB-UniRule"/>
</dbReference>
<dbReference type="CDD" id="cd02570">
    <property type="entry name" value="PseudoU_synth_EcTruA"/>
    <property type="match status" value="1"/>
</dbReference>
<dbReference type="FunFam" id="3.30.70.580:FF:000001">
    <property type="entry name" value="tRNA pseudouridine synthase A"/>
    <property type="match status" value="1"/>
</dbReference>
<dbReference type="Gene3D" id="3.30.70.660">
    <property type="entry name" value="Pseudouridine synthase I, catalytic domain, C-terminal subdomain"/>
    <property type="match status" value="1"/>
</dbReference>
<dbReference type="Gene3D" id="3.30.70.580">
    <property type="entry name" value="Pseudouridine synthase I, catalytic domain, N-terminal subdomain"/>
    <property type="match status" value="1"/>
</dbReference>
<dbReference type="HAMAP" id="MF_00171">
    <property type="entry name" value="TruA"/>
    <property type="match status" value="1"/>
</dbReference>
<dbReference type="InterPro" id="IPR020103">
    <property type="entry name" value="PsdUridine_synth_cat_dom_sf"/>
</dbReference>
<dbReference type="InterPro" id="IPR001406">
    <property type="entry name" value="PsdUridine_synth_TruA"/>
</dbReference>
<dbReference type="InterPro" id="IPR020097">
    <property type="entry name" value="PsdUridine_synth_TruA_a/b_dom"/>
</dbReference>
<dbReference type="InterPro" id="IPR020095">
    <property type="entry name" value="PsdUridine_synth_TruA_C"/>
</dbReference>
<dbReference type="InterPro" id="IPR020094">
    <property type="entry name" value="TruA/RsuA/RluB/E/F_N"/>
</dbReference>
<dbReference type="NCBIfam" id="TIGR00071">
    <property type="entry name" value="hisT_truA"/>
    <property type="match status" value="1"/>
</dbReference>
<dbReference type="PANTHER" id="PTHR11142">
    <property type="entry name" value="PSEUDOURIDYLATE SYNTHASE"/>
    <property type="match status" value="1"/>
</dbReference>
<dbReference type="PANTHER" id="PTHR11142:SF0">
    <property type="entry name" value="TRNA PSEUDOURIDINE SYNTHASE-LIKE 1"/>
    <property type="match status" value="1"/>
</dbReference>
<dbReference type="Pfam" id="PF01416">
    <property type="entry name" value="PseudoU_synth_1"/>
    <property type="match status" value="2"/>
</dbReference>
<dbReference type="PIRSF" id="PIRSF001430">
    <property type="entry name" value="tRNA_psdUrid_synth"/>
    <property type="match status" value="1"/>
</dbReference>
<dbReference type="SUPFAM" id="SSF55120">
    <property type="entry name" value="Pseudouridine synthase"/>
    <property type="match status" value="1"/>
</dbReference>
<reference key="1">
    <citation type="journal article" date="2005" name="Nat. Genet.">
        <title>The complete genome sequence of Francisella tularensis, the causative agent of tularemia.</title>
        <authorList>
            <person name="Larsson P."/>
            <person name="Oyston P.C.F."/>
            <person name="Chain P."/>
            <person name="Chu M.C."/>
            <person name="Duffield M."/>
            <person name="Fuxelius H.-H."/>
            <person name="Garcia E."/>
            <person name="Haelltorp G."/>
            <person name="Johansson D."/>
            <person name="Isherwood K.E."/>
            <person name="Karp P.D."/>
            <person name="Larsson E."/>
            <person name="Liu Y."/>
            <person name="Michell S."/>
            <person name="Prior J."/>
            <person name="Prior R."/>
            <person name="Malfatti S."/>
            <person name="Sjoestedt A."/>
            <person name="Svensson K."/>
            <person name="Thompson N."/>
            <person name="Vergez L."/>
            <person name="Wagg J.K."/>
            <person name="Wren B.W."/>
            <person name="Lindler L.E."/>
            <person name="Andersson S.G.E."/>
            <person name="Forsman M."/>
            <person name="Titball R.W."/>
        </authorList>
    </citation>
    <scope>NUCLEOTIDE SEQUENCE [LARGE SCALE GENOMIC DNA]</scope>
    <source>
        <strain>SCHU S4 / Schu 4</strain>
    </source>
</reference>
<gene>
    <name evidence="1" type="primary">truA</name>
    <name type="ordered locus">FTT_1021c</name>
</gene>
<evidence type="ECO:0000255" key="1">
    <source>
        <dbReference type="HAMAP-Rule" id="MF_00171"/>
    </source>
</evidence>